<comment type="function">
    <text evidence="1">NDH shuttles electrons from NAD(P)H:plastoquinone, via FMN and iron-sulfur (Fe-S) centers, to quinones in the photosynthetic chain and possibly in a chloroplast respiratory chain. The immediate electron acceptor for the enzyme in this species is believed to be plastoquinone. Couples the redox reaction to proton translocation, and thus conserves the redox energy in a proton gradient.</text>
</comment>
<comment type="catalytic activity">
    <reaction evidence="1">
        <text>a plastoquinone + NADH + (n+1) H(+)(in) = a plastoquinol + NAD(+) + n H(+)(out)</text>
        <dbReference type="Rhea" id="RHEA:42608"/>
        <dbReference type="Rhea" id="RHEA-COMP:9561"/>
        <dbReference type="Rhea" id="RHEA-COMP:9562"/>
        <dbReference type="ChEBI" id="CHEBI:15378"/>
        <dbReference type="ChEBI" id="CHEBI:17757"/>
        <dbReference type="ChEBI" id="CHEBI:57540"/>
        <dbReference type="ChEBI" id="CHEBI:57945"/>
        <dbReference type="ChEBI" id="CHEBI:62192"/>
    </reaction>
</comment>
<comment type="catalytic activity">
    <reaction evidence="1">
        <text>a plastoquinone + NADPH + (n+1) H(+)(in) = a plastoquinol + NADP(+) + n H(+)(out)</text>
        <dbReference type="Rhea" id="RHEA:42612"/>
        <dbReference type="Rhea" id="RHEA-COMP:9561"/>
        <dbReference type="Rhea" id="RHEA-COMP:9562"/>
        <dbReference type="ChEBI" id="CHEBI:15378"/>
        <dbReference type="ChEBI" id="CHEBI:17757"/>
        <dbReference type="ChEBI" id="CHEBI:57783"/>
        <dbReference type="ChEBI" id="CHEBI:58349"/>
        <dbReference type="ChEBI" id="CHEBI:62192"/>
    </reaction>
</comment>
<comment type="subunit">
    <text evidence="1">NDH is composed of at least 16 different subunits, 5 of which are encoded in the nucleus.</text>
</comment>
<comment type="subcellular location">
    <subcellularLocation>
        <location evidence="1">Plastid</location>
        <location evidence="1">Chloroplast thylakoid membrane</location>
        <topology evidence="1">Peripheral membrane protein</topology>
        <orientation evidence="1">Stromal side</orientation>
    </subcellularLocation>
</comment>
<comment type="similarity">
    <text evidence="1">Belongs to the complex I 30 kDa subunit family.</text>
</comment>
<accession>A4QJB8</accession>
<evidence type="ECO:0000255" key="1">
    <source>
        <dbReference type="HAMAP-Rule" id="MF_01357"/>
    </source>
</evidence>
<gene>
    <name evidence="1" type="primary">ndhJ</name>
</gene>
<feature type="chain" id="PRO_0000358237" description="NAD(P)H-quinone oxidoreductase subunit J, chloroplastic">
    <location>
        <begin position="1"/>
        <end position="158"/>
    </location>
</feature>
<keyword id="KW-0150">Chloroplast</keyword>
<keyword id="KW-0472">Membrane</keyword>
<keyword id="KW-0520">NAD</keyword>
<keyword id="KW-0521">NADP</keyword>
<keyword id="KW-0934">Plastid</keyword>
<keyword id="KW-0618">Plastoquinone</keyword>
<keyword id="KW-0874">Quinone</keyword>
<keyword id="KW-0793">Thylakoid</keyword>
<keyword id="KW-1278">Translocase</keyword>
<keyword id="KW-0813">Transport</keyword>
<name>NDHJ_AETCO</name>
<geneLocation type="chloroplast"/>
<reference key="1">
    <citation type="submission" date="2007-03" db="EMBL/GenBank/DDBJ databases">
        <title>Sequencing analysis of Aethionema coridifolium chloroplast DNA.</title>
        <authorList>
            <person name="Hosouchi T."/>
            <person name="Tsuruoka H."/>
            <person name="Kotani H."/>
        </authorList>
    </citation>
    <scope>NUCLEOTIDE SEQUENCE [LARGE SCALE GENOMIC DNA]</scope>
</reference>
<proteinExistence type="inferred from homology"/>
<dbReference type="EC" id="7.1.1.-" evidence="1"/>
<dbReference type="EMBL" id="AP009366">
    <property type="protein sequence ID" value="BAF49773.1"/>
    <property type="molecule type" value="Genomic_DNA"/>
</dbReference>
<dbReference type="RefSeq" id="YP_001122949.1">
    <property type="nucleotide sequence ID" value="NC_009265.1"/>
</dbReference>
<dbReference type="SMR" id="A4QJB8"/>
<dbReference type="GeneID" id="4968552"/>
<dbReference type="GO" id="GO:0009535">
    <property type="term" value="C:chloroplast thylakoid membrane"/>
    <property type="evidence" value="ECO:0007669"/>
    <property type="project" value="UniProtKB-SubCell"/>
</dbReference>
<dbReference type="GO" id="GO:0008137">
    <property type="term" value="F:NADH dehydrogenase (ubiquinone) activity"/>
    <property type="evidence" value="ECO:0007669"/>
    <property type="project" value="InterPro"/>
</dbReference>
<dbReference type="GO" id="GO:0048038">
    <property type="term" value="F:quinone binding"/>
    <property type="evidence" value="ECO:0007669"/>
    <property type="project" value="UniProtKB-KW"/>
</dbReference>
<dbReference type="GO" id="GO:0019684">
    <property type="term" value="P:photosynthesis, light reaction"/>
    <property type="evidence" value="ECO:0007669"/>
    <property type="project" value="UniProtKB-UniRule"/>
</dbReference>
<dbReference type="FunFam" id="3.30.460.80:FF:000004">
    <property type="entry name" value="NAD(P)H-quinone oxidoreductase subunit J, chloroplastic"/>
    <property type="match status" value="1"/>
</dbReference>
<dbReference type="Gene3D" id="3.30.460.80">
    <property type="entry name" value="NADH:ubiquinone oxidoreductase, 30kDa subunit"/>
    <property type="match status" value="1"/>
</dbReference>
<dbReference type="HAMAP" id="MF_01357">
    <property type="entry name" value="NDH1_NuoC"/>
    <property type="match status" value="1"/>
</dbReference>
<dbReference type="InterPro" id="IPR010218">
    <property type="entry name" value="NADH_DH_suC"/>
</dbReference>
<dbReference type="InterPro" id="IPR037232">
    <property type="entry name" value="NADH_quin_OxRdtase_su_C/D-like"/>
</dbReference>
<dbReference type="InterPro" id="IPR001268">
    <property type="entry name" value="NADH_UbQ_OxRdtase_30kDa_su"/>
</dbReference>
<dbReference type="InterPro" id="IPR020396">
    <property type="entry name" value="NADH_UbQ_OxRdtase_CS"/>
</dbReference>
<dbReference type="NCBIfam" id="NF009141">
    <property type="entry name" value="PRK12494.1"/>
    <property type="match status" value="1"/>
</dbReference>
<dbReference type="PANTHER" id="PTHR10884:SF14">
    <property type="entry name" value="NADH DEHYDROGENASE [UBIQUINONE] IRON-SULFUR PROTEIN 3, MITOCHONDRIAL"/>
    <property type="match status" value="1"/>
</dbReference>
<dbReference type="PANTHER" id="PTHR10884">
    <property type="entry name" value="NADH DEHYDROGENASE UBIQUINONE IRON-SULFUR PROTEIN 3"/>
    <property type="match status" value="1"/>
</dbReference>
<dbReference type="Pfam" id="PF00329">
    <property type="entry name" value="Complex1_30kDa"/>
    <property type="match status" value="1"/>
</dbReference>
<dbReference type="SUPFAM" id="SSF143243">
    <property type="entry name" value="Nqo5-like"/>
    <property type="match status" value="1"/>
</dbReference>
<dbReference type="PROSITE" id="PS00542">
    <property type="entry name" value="COMPLEX1_30K"/>
    <property type="match status" value="1"/>
</dbReference>
<protein>
    <recommendedName>
        <fullName evidence="1">NAD(P)H-quinone oxidoreductase subunit J, chloroplastic</fullName>
        <ecNumber evidence="1">7.1.1.-</ecNumber>
    </recommendedName>
    <alternativeName>
        <fullName>NAD(P)H dehydrogenase subunit J</fullName>
    </alternativeName>
    <alternativeName>
        <fullName evidence="1">NADH-plastoquinone oxidoreductase subunit J</fullName>
    </alternativeName>
</protein>
<sequence length="158" mass="18518">MQGTLSVWLAKRGLVHRSLGFDYQGIETLQIKPEDWHSIAVILYVYGYNYLRSQCAYDVAPGGLLASVYHLTRIEYGVNQAEEVCIKVFTHRSNSRIPSVFWVWKSADFQERESYDMLGITYDSHPRLKRILMPESWIGWPLRKDYIAPNFYEIQDAY</sequence>
<organism>
    <name type="scientific">Aethionema cordifolium</name>
    <name type="common">Lebanon stonecress</name>
    <dbReference type="NCBI Taxonomy" id="434059"/>
    <lineage>
        <taxon>Eukaryota</taxon>
        <taxon>Viridiplantae</taxon>
        <taxon>Streptophyta</taxon>
        <taxon>Embryophyta</taxon>
        <taxon>Tracheophyta</taxon>
        <taxon>Spermatophyta</taxon>
        <taxon>Magnoliopsida</taxon>
        <taxon>eudicotyledons</taxon>
        <taxon>Gunneridae</taxon>
        <taxon>Pentapetalae</taxon>
        <taxon>rosids</taxon>
        <taxon>malvids</taxon>
        <taxon>Brassicales</taxon>
        <taxon>Brassicaceae</taxon>
        <taxon>Aethionemeae</taxon>
        <taxon>Aethionema</taxon>
    </lineage>
</organism>